<evidence type="ECO:0000250" key="1">
    <source>
        <dbReference type="UniProtKB" id="P27467"/>
    </source>
</evidence>
<evidence type="ECO:0000250" key="2">
    <source>
        <dbReference type="UniProtKB" id="P28026"/>
    </source>
</evidence>
<evidence type="ECO:0000250" key="3">
    <source>
        <dbReference type="UniProtKB" id="P56704"/>
    </source>
</evidence>
<evidence type="ECO:0000250" key="4">
    <source>
        <dbReference type="UniProtKB" id="P56706"/>
    </source>
</evidence>
<evidence type="ECO:0000255" key="5"/>
<evidence type="ECO:0000269" key="6">
    <source>
    </source>
</evidence>
<evidence type="ECO:0000269" key="7">
    <source>
    </source>
</evidence>
<evidence type="ECO:0000269" key="8">
    <source>
    </source>
</evidence>
<evidence type="ECO:0000269" key="9">
    <source>
    </source>
</evidence>
<evidence type="ECO:0000305" key="10"/>
<sequence length="349" mass="39302">MHRNFRKWIFYVFLCFGVLYVKLGALSSVVALGANIICNKIPGLAPRQRAICQSRPDAIIVIGEGAQMGIDECQHQFRFGRWNCSALGEKTVFGQELRVGSREAAFTYAITAAGVAHAVTAACSQGNLSNCGCDREKQGYYNQAEGWKWGGCSADVRYGIDFSRRFVDAREIKKNARRLMNLHNNEAGRKVLEDRMKLECKCHGVSGSCTTKTCWTTLPKFREVGHLLKEKYNAAVQVEVVRASRLRQPTFLRIKQLRSYQKPMETDLVYIEKSPNYCEEDAATGSVGTQGRLCNRTSPGADGCDTMCCGRGYNTHQYTKVWQCNCKFHWCCFVKCNTCSERTEVFTCK</sequence>
<accession>P28047</accession>
<accession>Q80US5</accession>
<reference key="1">
    <citation type="journal article" date="1990" name="Genes Dev.">
        <title>Expression of multiple novel Wnt-1/int-1-related genes during fetal and adult mouse development.</title>
        <authorList>
            <person name="Gavin B.J."/>
            <person name="McMahon J.A."/>
            <person name="McMahon A.P."/>
        </authorList>
    </citation>
    <scope>NUCLEOTIDE SEQUENCE [MRNA]</scope>
</reference>
<reference key="2">
    <citation type="journal article" date="2004" name="Genome Res.">
        <title>The status, quality, and expansion of the NIH full-length cDNA project: the Mammalian Gene Collection (MGC).</title>
        <authorList>
            <consortium name="The MGC Project Team"/>
        </authorList>
    </citation>
    <scope>NUCLEOTIDE SEQUENCE [LARGE SCALE MRNA]</scope>
    <source>
        <strain>C57BL/6J</strain>
    </source>
</reference>
<reference key="3">
    <citation type="journal article" date="2000" name="Eur. J. Biochem.">
        <title>The evolutionarily conserved porcupine gene family is involved in the processing of the Wnt family.</title>
        <authorList>
            <person name="Tanaka K."/>
            <person name="Okabayashi H."/>
            <person name="Asashima M."/>
            <person name="Perrimon N."/>
            <person name="Kadowaki T."/>
        </authorList>
    </citation>
    <scope>INTERACTION WITH PORCN</scope>
</reference>
<reference key="4">
    <citation type="journal article" date="2001" name="Dev. Biol.">
        <title>Wnt7b regulates placental development in mice.</title>
        <authorList>
            <person name="Parr B.A."/>
            <person name="Cornish V.A."/>
            <person name="Cybulsky M.I."/>
            <person name="McMahon A.P."/>
        </authorList>
    </citation>
    <scope>FUNCTION</scope>
    <scope>DEVELOPMENTAL STAGE</scope>
</reference>
<reference key="5">
    <citation type="journal article" date="2005" name="Mol. Cell. Biol.">
        <title>Wnt7b activates canonical signaling in epithelial and vascular smooth muscle cells through interactions with Fzd1, Fzd10, and LRP5.</title>
        <authorList>
            <person name="Wang Z."/>
            <person name="Shu W."/>
            <person name="Lu M.M."/>
            <person name="Morrisey E.E."/>
        </authorList>
    </citation>
    <scope>FUNCTION</scope>
    <scope>INTERACTION WITH FZD1; FZD4 AND FZD10</scope>
    <scope>SUBCELLULAR LOCATION</scope>
</reference>
<reference key="6">
    <citation type="journal article" date="2017" name="Neuron">
        <title>Reck and Gpr124 Are Essential Receptor Cofactors for Wnt7a/Wnt7b-specific signaling in mammalian CNS angiogenesis and blood-brain barrier regulation.</title>
        <authorList>
            <person name="Cho C."/>
            <person name="Smallwood P.M."/>
            <person name="Nathans J."/>
        </authorList>
    </citation>
    <scope>FUNCTION</scope>
</reference>
<comment type="function">
    <text evidence="7 8 9">Ligand for members of the frizzled family of seven transmembrane receptors that functions in the canonical Wnt/beta-catenin signaling pathway (PubMed:15923619, PubMed:28803732). Required for normal fusion of the chorion and the allantois during placenta development (PubMed:11543617). Required for central nervous system (CNS) angiogenesis and blood-brain barrier regulation (PubMed:28803732).</text>
</comment>
<comment type="subunit">
    <text evidence="4 6 8">Forms a soluble 1:1 complex with AFM; this prevents oligomerization and is required for prolonged biological activity. The complex with AFM may represent the physiological form in body fluids (By similarity). Interacts with FZD1 and FZD10 (PubMed:15923619). Interacts with FZD4 (in vitro) (PubMed:15923619). Interacts with PORCN (PubMed:10866835). Interacts with glypican GPC3 (By similarity). Interacts (via intrinsically disordered linker region) with RECK; interaction with RECK confers ligand selectivity for Wnt7 in brain endothelial cells and allows these cells to selectively respond to Wnt7 (By similarity).</text>
</comment>
<comment type="subcellular location">
    <subcellularLocation>
        <location evidence="4">Secreted</location>
        <location evidence="4">Extracellular space</location>
        <location evidence="4">Extracellular matrix</location>
    </subcellularLocation>
    <subcellularLocation>
        <location evidence="8">Secreted</location>
    </subcellularLocation>
</comment>
<comment type="developmental stage">
    <text evidence="7">At 7.5 and 8.5 dpc, detected in extraembryonic membranes and cells that form the chorionic plate.</text>
</comment>
<comment type="domain">
    <text evidence="4">The intrinsically disordered linker region is required for recognition by RECK in brain endothelial cells.</text>
</comment>
<comment type="PTM">
    <text evidence="1 3">Palmitoleoylation is required for efficient binding to frizzled receptors. Depalmitoleoylation leads to Wnt signaling pathway inhibition.</text>
</comment>
<comment type="similarity">
    <text evidence="10">Belongs to the Wnt family.</text>
</comment>
<protein>
    <recommendedName>
        <fullName>Protein Wnt-7b</fullName>
    </recommendedName>
</protein>
<proteinExistence type="evidence at protein level"/>
<name>WNT7B_MOUSE</name>
<feature type="signal peptide" evidence="5">
    <location>
        <begin position="1"/>
        <end position="24"/>
    </location>
</feature>
<feature type="chain" id="PRO_0000041445" description="Protein Wnt-7b">
    <location>
        <begin position="25"/>
        <end position="349"/>
    </location>
</feature>
<feature type="region of interest" description="Disordered linker" evidence="4">
    <location>
        <begin position="238"/>
        <end position="266"/>
    </location>
</feature>
<feature type="lipid moiety-binding region" description="O-palmitoleoyl serine; by PORCN" evidence="3">
    <location>
        <position position="206"/>
    </location>
</feature>
<feature type="glycosylation site" description="N-linked (GlcNAc...) asparagine" evidence="5">
    <location>
        <position position="83"/>
    </location>
</feature>
<feature type="glycosylation site" description="N-linked (GlcNAc...) asparagine" evidence="5">
    <location>
        <position position="127"/>
    </location>
</feature>
<feature type="glycosylation site" description="N-linked (GlcNAc...) asparagine" evidence="5">
    <location>
        <position position="295"/>
    </location>
</feature>
<feature type="disulfide bond" evidence="2">
    <location>
        <begin position="73"/>
        <end position="84"/>
    </location>
</feature>
<feature type="disulfide bond" evidence="2">
    <location>
        <begin position="123"/>
        <end position="131"/>
    </location>
</feature>
<feature type="disulfide bond" evidence="2">
    <location>
        <begin position="133"/>
        <end position="152"/>
    </location>
</feature>
<feature type="disulfide bond" evidence="2">
    <location>
        <begin position="200"/>
        <end position="214"/>
    </location>
</feature>
<feature type="disulfide bond" evidence="2">
    <location>
        <begin position="202"/>
        <end position="209"/>
    </location>
</feature>
<feature type="disulfide bond" evidence="2">
    <location>
        <begin position="278"/>
        <end position="309"/>
    </location>
</feature>
<feature type="disulfide bond" evidence="2">
    <location>
        <begin position="294"/>
        <end position="304"/>
    </location>
</feature>
<feature type="disulfide bond" evidence="2">
    <location>
        <begin position="308"/>
        <end position="348"/>
    </location>
</feature>
<feature type="disulfide bond" evidence="2">
    <location>
        <begin position="324"/>
        <end position="339"/>
    </location>
</feature>
<feature type="disulfide bond" evidence="2">
    <location>
        <begin position="326"/>
        <end position="336"/>
    </location>
</feature>
<feature type="disulfide bond" evidence="2">
    <location>
        <begin position="331"/>
        <end position="332"/>
    </location>
</feature>
<feature type="sequence conflict" description="In Ref. 2; AAH52018." evidence="10" ref="2">
    <original>G</original>
    <variation>V</variation>
    <location>
        <position position="33"/>
    </location>
</feature>
<keyword id="KW-0217">Developmental protein</keyword>
<keyword id="KW-1015">Disulfide bond</keyword>
<keyword id="KW-0272">Extracellular matrix</keyword>
<keyword id="KW-0325">Glycoprotein</keyword>
<keyword id="KW-0449">Lipoprotein</keyword>
<keyword id="KW-1185">Reference proteome</keyword>
<keyword id="KW-0964">Secreted</keyword>
<keyword id="KW-0732">Signal</keyword>
<keyword id="KW-0879">Wnt signaling pathway</keyword>
<organism>
    <name type="scientific">Mus musculus</name>
    <name type="common">Mouse</name>
    <dbReference type="NCBI Taxonomy" id="10090"/>
    <lineage>
        <taxon>Eukaryota</taxon>
        <taxon>Metazoa</taxon>
        <taxon>Chordata</taxon>
        <taxon>Craniata</taxon>
        <taxon>Vertebrata</taxon>
        <taxon>Euteleostomi</taxon>
        <taxon>Mammalia</taxon>
        <taxon>Eutheria</taxon>
        <taxon>Euarchontoglires</taxon>
        <taxon>Glires</taxon>
        <taxon>Rodentia</taxon>
        <taxon>Myomorpha</taxon>
        <taxon>Muroidea</taxon>
        <taxon>Muridae</taxon>
        <taxon>Murinae</taxon>
        <taxon>Mus</taxon>
        <taxon>Mus</taxon>
    </lineage>
</organism>
<dbReference type="EMBL" id="M89802">
    <property type="protein sequence ID" value="AAA40571.1"/>
    <property type="molecule type" value="mRNA"/>
</dbReference>
<dbReference type="EMBL" id="BC052018">
    <property type="protein sequence ID" value="AAH52018.2"/>
    <property type="molecule type" value="mRNA"/>
</dbReference>
<dbReference type="CCDS" id="CCDS37171.1"/>
<dbReference type="PIR" id="H36470">
    <property type="entry name" value="H36470"/>
</dbReference>
<dbReference type="RefSeq" id="NP_001157105.1">
    <property type="nucleotide sequence ID" value="NM_001163633.1"/>
</dbReference>
<dbReference type="RefSeq" id="NP_001157106.1">
    <property type="nucleotide sequence ID" value="NM_001163634.1"/>
</dbReference>
<dbReference type="RefSeq" id="NP_033554.3">
    <property type="nucleotide sequence ID" value="NM_009528.3"/>
</dbReference>
<dbReference type="SMR" id="P28047"/>
<dbReference type="BioGRID" id="204581">
    <property type="interactions" value="7"/>
</dbReference>
<dbReference type="FunCoup" id="P28047">
    <property type="interactions" value="446"/>
</dbReference>
<dbReference type="IntAct" id="P28047">
    <property type="interactions" value="1"/>
</dbReference>
<dbReference type="STRING" id="10090.ENSMUSP00000155014"/>
<dbReference type="GlyCosmos" id="P28047">
    <property type="glycosylation" value="3 sites, No reported glycans"/>
</dbReference>
<dbReference type="GlyGen" id="P28047">
    <property type="glycosylation" value="4 sites, 1 N-linked glycan (1 site)"/>
</dbReference>
<dbReference type="iPTMnet" id="P28047"/>
<dbReference type="PhosphoSitePlus" id="P28047"/>
<dbReference type="PaxDb" id="10090-ENSMUSP00000105051"/>
<dbReference type="ProteomicsDB" id="297561"/>
<dbReference type="Antibodypedia" id="27975">
    <property type="antibodies" value="98 antibodies from 22 providers"/>
</dbReference>
<dbReference type="DNASU" id="22422"/>
<dbReference type="Ensembl" id="ENSMUST00000109424.4">
    <property type="protein sequence ID" value="ENSMUSP00000105051.4"/>
    <property type="gene ID" value="ENSMUSG00000022382.16"/>
</dbReference>
<dbReference type="GeneID" id="22422"/>
<dbReference type="KEGG" id="mmu:22422"/>
<dbReference type="UCSC" id="uc007xdf.2">
    <property type="organism name" value="mouse"/>
</dbReference>
<dbReference type="AGR" id="MGI:98962"/>
<dbReference type="CTD" id="7477"/>
<dbReference type="MGI" id="MGI:98962">
    <property type="gene designation" value="Wnt7b"/>
</dbReference>
<dbReference type="VEuPathDB" id="HostDB:ENSMUSG00000022382"/>
<dbReference type="eggNOG" id="KOG3913">
    <property type="taxonomic scope" value="Eukaryota"/>
</dbReference>
<dbReference type="GeneTree" id="ENSGT00940000158861"/>
<dbReference type="InParanoid" id="P28047"/>
<dbReference type="OMA" id="CKVHCET"/>
<dbReference type="OrthoDB" id="32547at9989"/>
<dbReference type="PhylomeDB" id="P28047"/>
<dbReference type="Reactome" id="R-MMU-3238698">
    <property type="pathway name" value="WNT ligand biogenesis and trafficking"/>
</dbReference>
<dbReference type="BioGRID-ORCS" id="22422">
    <property type="hits" value="2 hits in 78 CRISPR screens"/>
</dbReference>
<dbReference type="ChiTaRS" id="Wnt7b">
    <property type="organism name" value="mouse"/>
</dbReference>
<dbReference type="PRO" id="PR:P28047"/>
<dbReference type="Proteomes" id="UP000000589">
    <property type="component" value="Chromosome 15"/>
</dbReference>
<dbReference type="RNAct" id="P28047">
    <property type="molecule type" value="protein"/>
</dbReference>
<dbReference type="Bgee" id="ENSMUSG00000022382">
    <property type="expression patterns" value="Expressed in cortical plate and 243 other cell types or tissues"/>
</dbReference>
<dbReference type="ExpressionAtlas" id="P28047">
    <property type="expression patterns" value="baseline and differential"/>
</dbReference>
<dbReference type="GO" id="GO:0009986">
    <property type="term" value="C:cell surface"/>
    <property type="evidence" value="ECO:0000314"/>
    <property type="project" value="BHF-UCL"/>
</dbReference>
<dbReference type="GO" id="GO:0005788">
    <property type="term" value="C:endoplasmic reticulum lumen"/>
    <property type="evidence" value="ECO:0000304"/>
    <property type="project" value="Reactome"/>
</dbReference>
<dbReference type="GO" id="GO:0005576">
    <property type="term" value="C:extracellular region"/>
    <property type="evidence" value="ECO:0007669"/>
    <property type="project" value="UniProtKB-SubCell"/>
</dbReference>
<dbReference type="GO" id="GO:1902379">
    <property type="term" value="F:chemoattractant activity involved in axon guidance"/>
    <property type="evidence" value="ECO:0000314"/>
    <property type="project" value="ParkinsonsUK-UCL"/>
</dbReference>
<dbReference type="GO" id="GO:0005109">
    <property type="term" value="F:frizzled binding"/>
    <property type="evidence" value="ECO:0000353"/>
    <property type="project" value="MGI"/>
</dbReference>
<dbReference type="GO" id="GO:0048018">
    <property type="term" value="F:receptor ligand activity"/>
    <property type="evidence" value="ECO:0000305"/>
    <property type="project" value="BHF-UCL"/>
</dbReference>
<dbReference type="GO" id="GO:0060033">
    <property type="term" value="P:anatomical structure regression"/>
    <property type="evidence" value="ECO:0000315"/>
    <property type="project" value="MGI"/>
</dbReference>
<dbReference type="GO" id="GO:0001525">
    <property type="term" value="P:angiogenesis"/>
    <property type="evidence" value="ECO:0000315"/>
    <property type="project" value="MGI"/>
</dbReference>
<dbReference type="GO" id="GO:1902262">
    <property type="term" value="P:apoptotic process involved in blood vessel morphogenesis"/>
    <property type="evidence" value="ECO:0000315"/>
    <property type="project" value="MGI"/>
</dbReference>
<dbReference type="GO" id="GO:0060070">
    <property type="term" value="P:canonical Wnt signaling pathway"/>
    <property type="evidence" value="ECO:0000314"/>
    <property type="project" value="MGI"/>
</dbReference>
<dbReference type="GO" id="GO:0008283">
    <property type="term" value="P:cell population proliferation"/>
    <property type="evidence" value="ECO:0000315"/>
    <property type="project" value="MGI"/>
</dbReference>
<dbReference type="GO" id="GO:0021846">
    <property type="term" value="P:cell proliferation in forebrain"/>
    <property type="evidence" value="ECO:0000314"/>
    <property type="project" value="BHF-UCL"/>
</dbReference>
<dbReference type="GO" id="GO:0022009">
    <property type="term" value="P:central nervous system vasculogenesis"/>
    <property type="evidence" value="ECO:0000316"/>
    <property type="project" value="MGI"/>
</dbReference>
<dbReference type="GO" id="GO:0036516">
    <property type="term" value="P:chemoattraction of dopaminergic neuron axon"/>
    <property type="evidence" value="ECO:0000314"/>
    <property type="project" value="ParkinsonsUK-UCL"/>
</dbReference>
<dbReference type="GO" id="GO:0060710">
    <property type="term" value="P:chorio-allantoic fusion"/>
    <property type="evidence" value="ECO:0000315"/>
    <property type="project" value="MGI"/>
</dbReference>
<dbReference type="GO" id="GO:0060560">
    <property type="term" value="P:developmental growth involved in morphogenesis"/>
    <property type="evidence" value="ECO:0000315"/>
    <property type="project" value="MGI"/>
</dbReference>
<dbReference type="GO" id="GO:0048568">
    <property type="term" value="P:embryonic organ development"/>
    <property type="evidence" value="ECO:0000315"/>
    <property type="project" value="MGI"/>
</dbReference>
<dbReference type="GO" id="GO:0060669">
    <property type="term" value="P:embryonic placenta morphogenesis"/>
    <property type="evidence" value="ECO:0000315"/>
    <property type="project" value="MGI"/>
</dbReference>
<dbReference type="GO" id="GO:0016332">
    <property type="term" value="P:establishment or maintenance of polarity of embryonic epithelium"/>
    <property type="evidence" value="ECO:0000315"/>
    <property type="project" value="MGI"/>
</dbReference>
<dbReference type="GO" id="GO:0021871">
    <property type="term" value="P:forebrain regionalization"/>
    <property type="evidence" value="ECO:0000270"/>
    <property type="project" value="UniProtKB"/>
</dbReference>
<dbReference type="GO" id="GO:0042592">
    <property type="term" value="P:homeostatic process"/>
    <property type="evidence" value="ECO:0000315"/>
    <property type="project" value="MGI"/>
</dbReference>
<dbReference type="GO" id="GO:0001701">
    <property type="term" value="P:in utero embryonic development"/>
    <property type="evidence" value="ECO:0000315"/>
    <property type="project" value="MGI"/>
</dbReference>
<dbReference type="GO" id="GO:0072061">
    <property type="term" value="P:inner medullary collecting duct development"/>
    <property type="evidence" value="ECO:0000315"/>
    <property type="project" value="MGI"/>
</dbReference>
<dbReference type="GO" id="GO:0032364">
    <property type="term" value="P:intracellular oxygen homeostasis"/>
    <property type="evidence" value="ECO:0000315"/>
    <property type="project" value="MGI"/>
</dbReference>
<dbReference type="GO" id="GO:0060482">
    <property type="term" value="P:lobar bronchus development"/>
    <property type="evidence" value="ECO:0000315"/>
    <property type="project" value="MGI"/>
</dbReference>
<dbReference type="GO" id="GO:0030324">
    <property type="term" value="P:lung development"/>
    <property type="evidence" value="ECO:0000315"/>
    <property type="project" value="MGI"/>
</dbReference>
<dbReference type="GO" id="GO:0060428">
    <property type="term" value="P:lung epithelium development"/>
    <property type="evidence" value="ECO:0000315"/>
    <property type="project" value="MGI"/>
</dbReference>
<dbReference type="GO" id="GO:0060425">
    <property type="term" value="P:lung morphogenesis"/>
    <property type="evidence" value="ECO:0000315"/>
    <property type="project" value="MGI"/>
</dbReference>
<dbReference type="GO" id="GO:0060484">
    <property type="term" value="P:lung-associated mesenchyme development"/>
    <property type="evidence" value="ECO:0000315"/>
    <property type="project" value="MGI"/>
</dbReference>
<dbReference type="GO" id="GO:0072205">
    <property type="term" value="P:metanephric collecting duct development"/>
    <property type="evidence" value="ECO:0000315"/>
    <property type="project" value="MGI"/>
</dbReference>
<dbReference type="GO" id="GO:0072207">
    <property type="term" value="P:metanephric epithelium development"/>
    <property type="evidence" value="ECO:0000315"/>
    <property type="project" value="MGI"/>
</dbReference>
<dbReference type="GO" id="GO:0072236">
    <property type="term" value="P:metanephric loop of Henle development"/>
    <property type="evidence" value="ECO:0000315"/>
    <property type="project" value="MGI"/>
</dbReference>
<dbReference type="GO" id="GO:0003338">
    <property type="term" value="P:metanephros morphogenesis"/>
    <property type="evidence" value="ECO:0000315"/>
    <property type="project" value="MGI"/>
</dbReference>
<dbReference type="GO" id="GO:0050768">
    <property type="term" value="P:negative regulation of neurogenesis"/>
    <property type="evidence" value="ECO:0000314"/>
    <property type="project" value="BHF-UCL"/>
</dbReference>
<dbReference type="GO" id="GO:0045879">
    <property type="term" value="P:negative regulation of smoothened signaling pathway"/>
    <property type="evidence" value="ECO:0000315"/>
    <property type="project" value="MGI"/>
</dbReference>
<dbReference type="GO" id="GO:0042475">
    <property type="term" value="P:odontogenesis of dentin-containing tooth"/>
    <property type="evidence" value="ECO:0000315"/>
    <property type="project" value="MGI"/>
</dbReference>
<dbReference type="GO" id="GO:0001649">
    <property type="term" value="P:osteoblast differentiation"/>
    <property type="evidence" value="ECO:0000314"/>
    <property type="project" value="MGI"/>
</dbReference>
<dbReference type="GO" id="GO:0072060">
    <property type="term" value="P:outer medullary collecting duct development"/>
    <property type="evidence" value="ECO:0000315"/>
    <property type="project" value="MGI"/>
</dbReference>
<dbReference type="GO" id="GO:0008284">
    <property type="term" value="P:positive regulation of cell population proliferation"/>
    <property type="evidence" value="ECO:0000315"/>
    <property type="project" value="MGI"/>
</dbReference>
<dbReference type="GO" id="GO:0010628">
    <property type="term" value="P:positive regulation of gene expression"/>
    <property type="evidence" value="ECO:0000315"/>
    <property type="project" value="MGI"/>
</dbReference>
<dbReference type="GO" id="GO:0045669">
    <property type="term" value="P:positive regulation of osteoblast differentiation"/>
    <property type="evidence" value="ECO:0000314"/>
    <property type="project" value="MGI"/>
</dbReference>
<dbReference type="GO" id="GO:0072053">
    <property type="term" value="P:renal inner medulla development"/>
    <property type="evidence" value="ECO:0000315"/>
    <property type="project" value="MGI"/>
</dbReference>
<dbReference type="GO" id="GO:0072054">
    <property type="term" value="P:renal outer medulla development"/>
    <property type="evidence" value="ECO:0000315"/>
    <property type="project" value="MGI"/>
</dbReference>
<dbReference type="GO" id="GO:0051145">
    <property type="term" value="P:smooth muscle cell differentiation"/>
    <property type="evidence" value="ECO:0000315"/>
    <property type="project" value="MGI"/>
</dbReference>
<dbReference type="GO" id="GO:0048864">
    <property type="term" value="P:stem cell development"/>
    <property type="evidence" value="ECO:0000314"/>
    <property type="project" value="BHF-UCL"/>
</dbReference>
<dbReference type="GO" id="GO:0050808">
    <property type="term" value="P:synapse organization"/>
    <property type="evidence" value="ECO:0000316"/>
    <property type="project" value="MGI"/>
</dbReference>
<dbReference type="GO" id="GO:0060535">
    <property type="term" value="P:trachea cartilage morphogenesis"/>
    <property type="evidence" value="ECO:0000315"/>
    <property type="project" value="MGI"/>
</dbReference>
<dbReference type="GO" id="GO:0001944">
    <property type="term" value="P:vasculature development"/>
    <property type="evidence" value="ECO:0000315"/>
    <property type="project" value="MGI"/>
</dbReference>
<dbReference type="GO" id="GO:0016055">
    <property type="term" value="P:Wnt signaling pathway"/>
    <property type="evidence" value="ECO:0000315"/>
    <property type="project" value="MGI"/>
</dbReference>
<dbReference type="GO" id="GO:0060071">
    <property type="term" value="P:Wnt signaling pathway, planar cell polarity pathway"/>
    <property type="evidence" value="ECO:0000315"/>
    <property type="project" value="ParkinsonsUK-UCL"/>
</dbReference>
<dbReference type="CDD" id="cd19350">
    <property type="entry name" value="wnt_Wnt7b"/>
    <property type="match status" value="1"/>
</dbReference>
<dbReference type="FunFam" id="3.30.2460.20:FF:000001">
    <property type="entry name" value="Wnt homolog"/>
    <property type="match status" value="1"/>
</dbReference>
<dbReference type="Gene3D" id="3.30.2460.20">
    <property type="match status" value="1"/>
</dbReference>
<dbReference type="InterPro" id="IPR005817">
    <property type="entry name" value="Wnt"/>
</dbReference>
<dbReference type="InterPro" id="IPR013300">
    <property type="entry name" value="Wnt7"/>
</dbReference>
<dbReference type="InterPro" id="IPR043158">
    <property type="entry name" value="Wnt_C"/>
</dbReference>
<dbReference type="InterPro" id="IPR018161">
    <property type="entry name" value="Wnt_CS"/>
</dbReference>
<dbReference type="PANTHER" id="PTHR12027:SF73">
    <property type="entry name" value="PROTEIN WNT-7B"/>
    <property type="match status" value="1"/>
</dbReference>
<dbReference type="PANTHER" id="PTHR12027">
    <property type="entry name" value="WNT RELATED"/>
    <property type="match status" value="1"/>
</dbReference>
<dbReference type="Pfam" id="PF00110">
    <property type="entry name" value="wnt"/>
    <property type="match status" value="1"/>
</dbReference>
<dbReference type="PRINTS" id="PR01891">
    <property type="entry name" value="WNT7PROTEIN"/>
</dbReference>
<dbReference type="PRINTS" id="PR01349">
    <property type="entry name" value="WNTPROTEIN"/>
</dbReference>
<dbReference type="SMART" id="SM00097">
    <property type="entry name" value="WNT1"/>
    <property type="match status" value="1"/>
</dbReference>
<dbReference type="PROSITE" id="PS00246">
    <property type="entry name" value="WNT1"/>
    <property type="match status" value="1"/>
</dbReference>
<gene>
    <name type="primary">Wnt7b</name>
    <name type="synonym">Wnt-7b</name>
</gene>